<feature type="chain" id="PRO_0000189490" description="2-C-methyl-D-erythritol 2,4-cyclodiphosphate synthase">
    <location>
        <begin position="1"/>
        <end position="158"/>
    </location>
</feature>
<feature type="binding site" evidence="1">
    <location>
        <begin position="9"/>
        <end position="11"/>
    </location>
    <ligand>
        <name>4-CDP-2-C-methyl-D-erythritol 2-phosphate</name>
        <dbReference type="ChEBI" id="CHEBI:57919"/>
    </ligand>
</feature>
<feature type="binding site" evidence="1">
    <location>
        <position position="9"/>
    </location>
    <ligand>
        <name>a divalent metal cation</name>
        <dbReference type="ChEBI" id="CHEBI:60240"/>
    </ligand>
</feature>
<feature type="binding site" evidence="1">
    <location>
        <position position="11"/>
    </location>
    <ligand>
        <name>a divalent metal cation</name>
        <dbReference type="ChEBI" id="CHEBI:60240"/>
    </ligand>
</feature>
<feature type="binding site" evidence="1">
    <location>
        <begin position="35"/>
        <end position="36"/>
    </location>
    <ligand>
        <name>4-CDP-2-C-methyl-D-erythritol 2-phosphate</name>
        <dbReference type="ChEBI" id="CHEBI:57919"/>
    </ligand>
</feature>
<feature type="binding site" evidence="1">
    <location>
        <position position="43"/>
    </location>
    <ligand>
        <name>a divalent metal cation</name>
        <dbReference type="ChEBI" id="CHEBI:60240"/>
    </ligand>
</feature>
<feature type="binding site" evidence="1">
    <location>
        <begin position="57"/>
        <end position="59"/>
    </location>
    <ligand>
        <name>4-CDP-2-C-methyl-D-erythritol 2-phosphate</name>
        <dbReference type="ChEBI" id="CHEBI:57919"/>
    </ligand>
</feature>
<feature type="binding site" evidence="1">
    <location>
        <begin position="62"/>
        <end position="66"/>
    </location>
    <ligand>
        <name>4-CDP-2-C-methyl-D-erythritol 2-phosphate</name>
        <dbReference type="ChEBI" id="CHEBI:57919"/>
    </ligand>
</feature>
<feature type="binding site" evidence="1">
    <location>
        <begin position="133"/>
        <end position="136"/>
    </location>
    <ligand>
        <name>4-CDP-2-C-methyl-D-erythritol 2-phosphate</name>
        <dbReference type="ChEBI" id="CHEBI:57919"/>
    </ligand>
</feature>
<feature type="binding site" evidence="1">
    <location>
        <position position="140"/>
    </location>
    <ligand>
        <name>4-CDP-2-C-methyl-D-erythritol 2-phosphate</name>
        <dbReference type="ChEBI" id="CHEBI:57919"/>
    </ligand>
</feature>
<feature type="binding site" evidence="1">
    <location>
        <position position="143"/>
    </location>
    <ligand>
        <name>4-CDP-2-C-methyl-D-erythritol 2-phosphate</name>
        <dbReference type="ChEBI" id="CHEBI:57919"/>
    </ligand>
</feature>
<feature type="site" description="Transition state stabilizer" evidence="1">
    <location>
        <position position="35"/>
    </location>
</feature>
<feature type="site" description="Transition state stabilizer" evidence="1">
    <location>
        <position position="134"/>
    </location>
</feature>
<accession>P57954</accession>
<comment type="function">
    <text evidence="1">Involved in the biosynthesis of isopentenyl diphosphate (IPP) and dimethylallyl diphosphate (DMAPP), two major building blocks of isoprenoid compounds. Catalyzes the conversion of 4-diphosphocytidyl-2-C-methyl-D-erythritol 2-phosphate (CDP-ME2P) to 2-C-methyl-D-erythritol 2,4-cyclodiphosphate (ME-CPP) with a corresponding release of cytidine 5-monophosphate (CMP).</text>
</comment>
<comment type="catalytic activity">
    <reaction evidence="1">
        <text>4-CDP-2-C-methyl-D-erythritol 2-phosphate = 2-C-methyl-D-erythritol 2,4-cyclic diphosphate + CMP</text>
        <dbReference type="Rhea" id="RHEA:23864"/>
        <dbReference type="ChEBI" id="CHEBI:57919"/>
        <dbReference type="ChEBI" id="CHEBI:58483"/>
        <dbReference type="ChEBI" id="CHEBI:60377"/>
        <dbReference type="EC" id="4.6.1.12"/>
    </reaction>
</comment>
<comment type="cofactor">
    <cofactor evidence="1">
        <name>a divalent metal cation</name>
        <dbReference type="ChEBI" id="CHEBI:60240"/>
    </cofactor>
    <text evidence="1">Binds 1 divalent metal cation per subunit.</text>
</comment>
<comment type="pathway">
    <text evidence="1">Isoprenoid biosynthesis; isopentenyl diphosphate biosynthesis via DXP pathway; isopentenyl diphosphate from 1-deoxy-D-xylulose 5-phosphate: step 4/6.</text>
</comment>
<comment type="subunit">
    <text evidence="1">Homotrimer.</text>
</comment>
<comment type="similarity">
    <text evidence="1">Belongs to the IspF family.</text>
</comment>
<organism>
    <name type="scientific">Pasteurella multocida (strain Pm70)</name>
    <dbReference type="NCBI Taxonomy" id="272843"/>
    <lineage>
        <taxon>Bacteria</taxon>
        <taxon>Pseudomonadati</taxon>
        <taxon>Pseudomonadota</taxon>
        <taxon>Gammaproteobacteria</taxon>
        <taxon>Pasteurellales</taxon>
        <taxon>Pasteurellaceae</taxon>
        <taxon>Pasteurella</taxon>
    </lineage>
</organism>
<keyword id="KW-0414">Isoprene biosynthesis</keyword>
<keyword id="KW-0456">Lyase</keyword>
<keyword id="KW-0479">Metal-binding</keyword>
<keyword id="KW-1185">Reference proteome</keyword>
<gene>
    <name evidence="1" type="primary">ispF</name>
    <name type="ordered locus">PM1609</name>
</gene>
<protein>
    <recommendedName>
        <fullName evidence="1">2-C-methyl-D-erythritol 2,4-cyclodiphosphate synthase</fullName>
        <shortName evidence="1">MECDP-synthase</shortName>
        <shortName evidence="1">MECPP-synthase</shortName>
        <shortName evidence="1">MECPS</shortName>
        <ecNumber evidence="1">4.6.1.12</ecNumber>
    </recommendedName>
</protein>
<proteinExistence type="inferred from homology"/>
<reference key="1">
    <citation type="journal article" date="2001" name="Proc. Natl. Acad. Sci. U.S.A.">
        <title>Complete genomic sequence of Pasteurella multocida Pm70.</title>
        <authorList>
            <person name="May B.J."/>
            <person name="Zhang Q."/>
            <person name="Li L.L."/>
            <person name="Paustian M.L."/>
            <person name="Whittam T.S."/>
            <person name="Kapur V."/>
        </authorList>
    </citation>
    <scope>NUCLEOTIDE SEQUENCE [LARGE SCALE GENOMIC DNA]</scope>
    <source>
        <strain>Pm70</strain>
    </source>
</reference>
<dbReference type="EC" id="4.6.1.12" evidence="1"/>
<dbReference type="EMBL" id="AE004439">
    <property type="protein sequence ID" value="AAK03693.1"/>
    <property type="molecule type" value="Genomic_DNA"/>
</dbReference>
<dbReference type="RefSeq" id="WP_010907251.1">
    <property type="nucleotide sequence ID" value="NC_002663.1"/>
</dbReference>
<dbReference type="SMR" id="P57954"/>
<dbReference type="STRING" id="272843.PM1609"/>
<dbReference type="EnsemblBacteria" id="AAK03693">
    <property type="protein sequence ID" value="AAK03693"/>
    <property type="gene ID" value="PM1609"/>
</dbReference>
<dbReference type="KEGG" id="pmu:PM1609"/>
<dbReference type="PATRIC" id="fig|272843.6.peg.1628"/>
<dbReference type="HOGENOM" id="CLU_084630_2_0_6"/>
<dbReference type="OrthoDB" id="9804336at2"/>
<dbReference type="UniPathway" id="UPA00056">
    <property type="reaction ID" value="UER00095"/>
</dbReference>
<dbReference type="Proteomes" id="UP000000809">
    <property type="component" value="Chromosome"/>
</dbReference>
<dbReference type="GO" id="GO:0008685">
    <property type="term" value="F:2-C-methyl-D-erythritol 2,4-cyclodiphosphate synthase activity"/>
    <property type="evidence" value="ECO:0007669"/>
    <property type="project" value="UniProtKB-UniRule"/>
</dbReference>
<dbReference type="GO" id="GO:0046872">
    <property type="term" value="F:metal ion binding"/>
    <property type="evidence" value="ECO:0007669"/>
    <property type="project" value="UniProtKB-KW"/>
</dbReference>
<dbReference type="GO" id="GO:0019288">
    <property type="term" value="P:isopentenyl diphosphate biosynthetic process, methylerythritol 4-phosphate pathway"/>
    <property type="evidence" value="ECO:0007669"/>
    <property type="project" value="UniProtKB-UniRule"/>
</dbReference>
<dbReference type="GO" id="GO:0016114">
    <property type="term" value="P:terpenoid biosynthetic process"/>
    <property type="evidence" value="ECO:0007669"/>
    <property type="project" value="InterPro"/>
</dbReference>
<dbReference type="CDD" id="cd00554">
    <property type="entry name" value="MECDP_synthase"/>
    <property type="match status" value="1"/>
</dbReference>
<dbReference type="FunFam" id="3.30.1330.50:FF:000001">
    <property type="entry name" value="2-C-methyl-D-erythritol 2,4-cyclodiphosphate synthase"/>
    <property type="match status" value="1"/>
</dbReference>
<dbReference type="Gene3D" id="3.30.1330.50">
    <property type="entry name" value="2-C-methyl-D-erythritol 2,4-cyclodiphosphate synthase"/>
    <property type="match status" value="1"/>
</dbReference>
<dbReference type="HAMAP" id="MF_00107">
    <property type="entry name" value="IspF"/>
    <property type="match status" value="1"/>
</dbReference>
<dbReference type="InterPro" id="IPR003526">
    <property type="entry name" value="MECDP_synthase"/>
</dbReference>
<dbReference type="InterPro" id="IPR020555">
    <property type="entry name" value="MECDP_synthase_CS"/>
</dbReference>
<dbReference type="InterPro" id="IPR036571">
    <property type="entry name" value="MECDP_synthase_sf"/>
</dbReference>
<dbReference type="NCBIfam" id="TIGR00151">
    <property type="entry name" value="ispF"/>
    <property type="match status" value="1"/>
</dbReference>
<dbReference type="PANTHER" id="PTHR43181">
    <property type="entry name" value="2-C-METHYL-D-ERYTHRITOL 2,4-CYCLODIPHOSPHATE SYNTHASE, CHLOROPLASTIC"/>
    <property type="match status" value="1"/>
</dbReference>
<dbReference type="PANTHER" id="PTHR43181:SF1">
    <property type="entry name" value="2-C-METHYL-D-ERYTHRITOL 2,4-CYCLODIPHOSPHATE SYNTHASE, CHLOROPLASTIC"/>
    <property type="match status" value="1"/>
</dbReference>
<dbReference type="Pfam" id="PF02542">
    <property type="entry name" value="YgbB"/>
    <property type="match status" value="1"/>
</dbReference>
<dbReference type="SUPFAM" id="SSF69765">
    <property type="entry name" value="IpsF-like"/>
    <property type="match status" value="1"/>
</dbReference>
<dbReference type="PROSITE" id="PS01350">
    <property type="entry name" value="ISPF"/>
    <property type="match status" value="1"/>
</dbReference>
<evidence type="ECO:0000255" key="1">
    <source>
        <dbReference type="HAMAP-Rule" id="MF_00107"/>
    </source>
</evidence>
<sequence>MIRIGHGFDVHAFGGEGPIIIGGVAIPYEKGLLAHSDGDVALHALTDALLGAVALGDIGKLFPDTDMQYKGADSRGLLREAYTQVQAKGYKVGNVDVTIIAQAPKMRPHIDAMRAAIAEDLACDIEQVNVKATTSERLGFTGRGEGIACEAVALVVKS</sequence>
<name>ISPF_PASMU</name>